<dbReference type="EC" id="3.1.3.5" evidence="1"/>
<dbReference type="EMBL" id="CR555306">
    <property type="protein sequence ID" value="CAI06529.1"/>
    <property type="molecule type" value="Genomic_DNA"/>
</dbReference>
<dbReference type="RefSeq" id="WP_011236263.1">
    <property type="nucleotide sequence ID" value="NC_006513.1"/>
</dbReference>
<dbReference type="SMR" id="Q5P832"/>
<dbReference type="STRING" id="76114.ebA782"/>
<dbReference type="KEGG" id="eba:ebA782"/>
<dbReference type="eggNOG" id="COG0496">
    <property type="taxonomic scope" value="Bacteria"/>
</dbReference>
<dbReference type="HOGENOM" id="CLU_045192_1_2_4"/>
<dbReference type="OrthoDB" id="9780815at2"/>
<dbReference type="Proteomes" id="UP000006552">
    <property type="component" value="Chromosome"/>
</dbReference>
<dbReference type="GO" id="GO:0005737">
    <property type="term" value="C:cytoplasm"/>
    <property type="evidence" value="ECO:0007669"/>
    <property type="project" value="UniProtKB-SubCell"/>
</dbReference>
<dbReference type="GO" id="GO:0008254">
    <property type="term" value="F:3'-nucleotidase activity"/>
    <property type="evidence" value="ECO:0007669"/>
    <property type="project" value="TreeGrafter"/>
</dbReference>
<dbReference type="GO" id="GO:0008253">
    <property type="term" value="F:5'-nucleotidase activity"/>
    <property type="evidence" value="ECO:0007669"/>
    <property type="project" value="UniProtKB-UniRule"/>
</dbReference>
<dbReference type="GO" id="GO:0004309">
    <property type="term" value="F:exopolyphosphatase activity"/>
    <property type="evidence" value="ECO:0007669"/>
    <property type="project" value="TreeGrafter"/>
</dbReference>
<dbReference type="GO" id="GO:0046872">
    <property type="term" value="F:metal ion binding"/>
    <property type="evidence" value="ECO:0007669"/>
    <property type="project" value="UniProtKB-UniRule"/>
</dbReference>
<dbReference type="GO" id="GO:0000166">
    <property type="term" value="F:nucleotide binding"/>
    <property type="evidence" value="ECO:0007669"/>
    <property type="project" value="UniProtKB-KW"/>
</dbReference>
<dbReference type="FunFam" id="3.40.1210.10:FF:000001">
    <property type="entry name" value="5'/3'-nucleotidase SurE"/>
    <property type="match status" value="1"/>
</dbReference>
<dbReference type="Gene3D" id="3.40.1210.10">
    <property type="entry name" value="Survival protein SurE-like phosphatase/nucleotidase"/>
    <property type="match status" value="1"/>
</dbReference>
<dbReference type="HAMAP" id="MF_00060">
    <property type="entry name" value="SurE"/>
    <property type="match status" value="1"/>
</dbReference>
<dbReference type="InterPro" id="IPR030048">
    <property type="entry name" value="SurE"/>
</dbReference>
<dbReference type="InterPro" id="IPR002828">
    <property type="entry name" value="SurE-like_Pase/nucleotidase"/>
</dbReference>
<dbReference type="InterPro" id="IPR036523">
    <property type="entry name" value="SurE-like_sf"/>
</dbReference>
<dbReference type="NCBIfam" id="NF001489">
    <property type="entry name" value="PRK00346.1-3"/>
    <property type="match status" value="1"/>
</dbReference>
<dbReference type="NCBIfam" id="NF001490">
    <property type="entry name" value="PRK00346.1-4"/>
    <property type="match status" value="1"/>
</dbReference>
<dbReference type="NCBIfam" id="TIGR00087">
    <property type="entry name" value="surE"/>
    <property type="match status" value="1"/>
</dbReference>
<dbReference type="PANTHER" id="PTHR30457">
    <property type="entry name" value="5'-NUCLEOTIDASE SURE"/>
    <property type="match status" value="1"/>
</dbReference>
<dbReference type="PANTHER" id="PTHR30457:SF12">
    <property type="entry name" value="5'_3'-NUCLEOTIDASE SURE"/>
    <property type="match status" value="1"/>
</dbReference>
<dbReference type="Pfam" id="PF01975">
    <property type="entry name" value="SurE"/>
    <property type="match status" value="1"/>
</dbReference>
<dbReference type="SUPFAM" id="SSF64167">
    <property type="entry name" value="SurE-like"/>
    <property type="match status" value="1"/>
</dbReference>
<gene>
    <name evidence="1" type="primary">surE</name>
    <name type="ordered locus">AZOSEA04070</name>
    <name type="ORF">ebA782</name>
</gene>
<accession>Q5P832</accession>
<comment type="function">
    <text evidence="1">Nucleotidase that shows phosphatase activity on nucleoside 5'-monophosphates.</text>
</comment>
<comment type="catalytic activity">
    <reaction evidence="1">
        <text>a ribonucleoside 5'-phosphate + H2O = a ribonucleoside + phosphate</text>
        <dbReference type="Rhea" id="RHEA:12484"/>
        <dbReference type="ChEBI" id="CHEBI:15377"/>
        <dbReference type="ChEBI" id="CHEBI:18254"/>
        <dbReference type="ChEBI" id="CHEBI:43474"/>
        <dbReference type="ChEBI" id="CHEBI:58043"/>
        <dbReference type="EC" id="3.1.3.5"/>
    </reaction>
</comment>
<comment type="cofactor">
    <cofactor evidence="1">
        <name>a divalent metal cation</name>
        <dbReference type="ChEBI" id="CHEBI:60240"/>
    </cofactor>
    <text evidence="1">Binds 1 divalent metal cation per subunit.</text>
</comment>
<comment type="subcellular location">
    <subcellularLocation>
        <location evidence="1">Cytoplasm</location>
    </subcellularLocation>
</comment>
<comment type="similarity">
    <text evidence="1">Belongs to the SurE nucleotidase family.</text>
</comment>
<keyword id="KW-0963">Cytoplasm</keyword>
<keyword id="KW-0378">Hydrolase</keyword>
<keyword id="KW-0479">Metal-binding</keyword>
<keyword id="KW-0547">Nucleotide-binding</keyword>
<keyword id="KW-1185">Reference proteome</keyword>
<name>SURE_AROAE</name>
<feature type="chain" id="PRO_0000235591" description="5'-nucleotidase SurE">
    <location>
        <begin position="1"/>
        <end position="247"/>
    </location>
</feature>
<feature type="binding site" evidence="1">
    <location>
        <position position="8"/>
    </location>
    <ligand>
        <name>a divalent metal cation</name>
        <dbReference type="ChEBI" id="CHEBI:60240"/>
    </ligand>
</feature>
<feature type="binding site" evidence="1">
    <location>
        <position position="9"/>
    </location>
    <ligand>
        <name>a divalent metal cation</name>
        <dbReference type="ChEBI" id="CHEBI:60240"/>
    </ligand>
</feature>
<feature type="binding site" evidence="1">
    <location>
        <position position="39"/>
    </location>
    <ligand>
        <name>a divalent metal cation</name>
        <dbReference type="ChEBI" id="CHEBI:60240"/>
    </ligand>
</feature>
<feature type="binding site" evidence="1">
    <location>
        <position position="91"/>
    </location>
    <ligand>
        <name>a divalent metal cation</name>
        <dbReference type="ChEBI" id="CHEBI:60240"/>
    </ligand>
</feature>
<organism>
    <name type="scientific">Aromatoleum aromaticum (strain DSM 19018 / LMG 30748 / EbN1)</name>
    <name type="common">Azoarcus sp. (strain EbN1)</name>
    <dbReference type="NCBI Taxonomy" id="76114"/>
    <lineage>
        <taxon>Bacteria</taxon>
        <taxon>Pseudomonadati</taxon>
        <taxon>Pseudomonadota</taxon>
        <taxon>Betaproteobacteria</taxon>
        <taxon>Rhodocyclales</taxon>
        <taxon>Rhodocyclaceae</taxon>
        <taxon>Aromatoleum</taxon>
    </lineage>
</organism>
<reference key="1">
    <citation type="journal article" date="2005" name="Arch. Microbiol.">
        <title>The genome sequence of an anaerobic aromatic-degrading denitrifying bacterium, strain EbN1.</title>
        <authorList>
            <person name="Rabus R."/>
            <person name="Kube M."/>
            <person name="Heider J."/>
            <person name="Beck A."/>
            <person name="Heitmann K."/>
            <person name="Widdel F."/>
            <person name="Reinhardt R."/>
        </authorList>
    </citation>
    <scope>NUCLEOTIDE SEQUENCE [LARGE SCALE GENOMIC DNA]</scope>
    <source>
        <strain>DSM 19018 / LMG 30748 / EbN1</strain>
    </source>
</reference>
<protein>
    <recommendedName>
        <fullName evidence="1">5'-nucleotidase SurE</fullName>
        <ecNumber evidence="1">3.1.3.5</ecNumber>
    </recommendedName>
    <alternativeName>
        <fullName evidence="1">Nucleoside 5'-monophosphate phosphohydrolase</fullName>
    </alternativeName>
</protein>
<sequence length="247" mass="26261">MRILVSNDDGYFAPGIAALAEALQEVGDVTVVAPERDRSAASNSLTLDRPLSLRRAANGFHFVNGTPTDCVHLAVTGMLDHLPDMVVSGVNHGANMGDDTIYSGTVAAATEGFLLGVPAIAVSLVSKAATDFSAAARVARDLAERFTRIPFQHPVLLNVNVPDRPYEELRGLRVTRLGKRHKAEPVIRSVTPRNETVYWVGAAGQAADAGEGTDFQAVAEGFVSVTPLQIDLTHNGLIPSVAEWIGR</sequence>
<proteinExistence type="inferred from homology"/>
<evidence type="ECO:0000255" key="1">
    <source>
        <dbReference type="HAMAP-Rule" id="MF_00060"/>
    </source>
</evidence>